<sequence>MSQRQPQSPNQTLISITNDTETSSSAVSNDTTPKGWTGDNSPGIEALCAIYITYAVIISVGILGNAILIKVFFKTKSMQTVPNIFITSLAFGDLLLLLTCVPVDATHYLAEGWLFGKVGCKVLSFIRLTSVGVSVFTLTILSADRYKAVVKPLERQPSNAILKTCAKAGGIWIMAMIFALPEAIFSNVYTFQDPNRNVTFESCNSYPISERLLQEIHSLLCFLVFYIIPLSIISVYYSLIARTLYKSTLNIPTEEQSHARKQIESRKRIAKTVLVLVALFALCWLPNHLLYLYHSFTYESYAEPSDVPFVVTIFSRVLAFSNSCVNPFALYWLSKTFQKHFKAQLCCFKAEQPEPPLGDTPLNNLTVMGRVPATGSAHVSEISVTLFSGSTAKKGEDKV</sequence>
<protein>
    <recommendedName>
        <fullName>Bombesin receptor subtype-3</fullName>
        <shortName>BRS-3</shortName>
    </recommendedName>
</protein>
<comment type="function">
    <text>Role in sperm cell division, maturation, or function. This receptor mediates its action by association with G proteins that activate a phosphatidylinositol-calcium second messenger system.</text>
</comment>
<comment type="subunit">
    <text evidence="1">Interacts with C6orf89.</text>
</comment>
<comment type="subcellular location">
    <subcellularLocation>
        <location>Cell membrane</location>
        <topology>Multi-pass membrane protein</topology>
    </subcellularLocation>
</comment>
<comment type="similarity">
    <text evidence="3">Belongs to the G-protein coupled receptor 1 family.</text>
</comment>
<feature type="chain" id="PRO_0000263005" description="Bombesin receptor subtype-3">
    <location>
        <begin position="1"/>
        <end position="399"/>
    </location>
</feature>
<feature type="topological domain" description="Extracellular" evidence="2">
    <location>
        <begin position="1"/>
        <end position="41"/>
    </location>
</feature>
<feature type="transmembrane region" description="Helical; Name=1" evidence="2">
    <location>
        <begin position="42"/>
        <end position="63"/>
    </location>
</feature>
<feature type="topological domain" description="Cytoplasmic" evidence="2">
    <location>
        <begin position="64"/>
        <end position="82"/>
    </location>
</feature>
<feature type="transmembrane region" description="Helical; Name=2" evidence="2">
    <location>
        <begin position="83"/>
        <end position="103"/>
    </location>
</feature>
<feature type="topological domain" description="Extracellular" evidence="2">
    <location>
        <begin position="104"/>
        <end position="121"/>
    </location>
</feature>
<feature type="transmembrane region" description="Helical; Name=3" evidence="2">
    <location>
        <begin position="122"/>
        <end position="143"/>
    </location>
</feature>
<feature type="topological domain" description="Cytoplasmic" evidence="2">
    <location>
        <begin position="144"/>
        <end position="163"/>
    </location>
</feature>
<feature type="transmembrane region" description="Helical; Name=4" evidence="2">
    <location>
        <begin position="164"/>
        <end position="184"/>
    </location>
</feature>
<feature type="topological domain" description="Extracellular" evidence="2">
    <location>
        <begin position="185"/>
        <end position="220"/>
    </location>
</feature>
<feature type="transmembrane region" description="Helical; Name=5" evidence="2">
    <location>
        <begin position="221"/>
        <end position="241"/>
    </location>
</feature>
<feature type="topological domain" description="Cytoplasmic" evidence="2">
    <location>
        <begin position="242"/>
        <end position="272"/>
    </location>
</feature>
<feature type="transmembrane region" description="Helical; Name=6" evidence="2">
    <location>
        <begin position="273"/>
        <end position="293"/>
    </location>
</feature>
<feature type="topological domain" description="Extracellular" evidence="2">
    <location>
        <begin position="294"/>
        <end position="313"/>
    </location>
</feature>
<feature type="transmembrane region" description="Helical; Name=7" evidence="2">
    <location>
        <begin position="314"/>
        <end position="333"/>
    </location>
</feature>
<feature type="topological domain" description="Cytoplasmic" evidence="2">
    <location>
        <begin position="334"/>
        <end position="399"/>
    </location>
</feature>
<feature type="lipid moiety-binding region" description="S-palmitoyl cysteine" evidence="1">
    <location>
        <position position="347"/>
    </location>
</feature>
<feature type="glycosylation site" description="N-linked (GlcNAc...) asparagine" evidence="2">
    <location>
        <position position="10"/>
    </location>
</feature>
<feature type="glycosylation site" description="N-linked (GlcNAc...) asparagine" evidence="2">
    <location>
        <position position="18"/>
    </location>
</feature>
<feature type="glycosylation site" description="N-linked (GlcNAc...) asparagine" evidence="2">
    <location>
        <position position="29"/>
    </location>
</feature>
<feature type="disulfide bond" evidence="3">
    <location>
        <begin position="120"/>
        <end position="203"/>
    </location>
</feature>
<gene>
    <name type="primary">Brs3</name>
</gene>
<proteinExistence type="evidence at transcript level"/>
<reference key="1">
    <citation type="journal article" date="2002" name="Biochemistry">
        <title>Molecular basis of the pharmacological difference between rat and human bombesin receptor subtype-3 (BRS-3).</title>
        <authorList>
            <person name="Liu J."/>
            <person name="Lao Z.J."/>
            <person name="Zhang J."/>
            <person name="Schaeffer M.T."/>
            <person name="Jiang M.M."/>
            <person name="Guan X.M."/>
            <person name="van der Ploeg L.H.T."/>
            <person name="Fong T.M."/>
        </authorList>
    </citation>
    <scope>NUCLEOTIDE SEQUENCE [MRNA]</scope>
    <source>
        <strain>Sprague-Dawley</strain>
    </source>
</reference>
<organism>
    <name type="scientific">Rattus norvegicus</name>
    <name type="common">Rat</name>
    <dbReference type="NCBI Taxonomy" id="10116"/>
    <lineage>
        <taxon>Eukaryota</taxon>
        <taxon>Metazoa</taxon>
        <taxon>Chordata</taxon>
        <taxon>Craniata</taxon>
        <taxon>Vertebrata</taxon>
        <taxon>Euteleostomi</taxon>
        <taxon>Mammalia</taxon>
        <taxon>Eutheria</taxon>
        <taxon>Euarchontoglires</taxon>
        <taxon>Glires</taxon>
        <taxon>Rodentia</taxon>
        <taxon>Myomorpha</taxon>
        <taxon>Muroidea</taxon>
        <taxon>Muridae</taxon>
        <taxon>Murinae</taxon>
        <taxon>Rattus</taxon>
    </lineage>
</organism>
<dbReference type="EMBL" id="AF510984">
    <property type="protein sequence ID" value="AAM95932.1"/>
    <property type="molecule type" value="mRNA"/>
</dbReference>
<dbReference type="RefSeq" id="NP_690058.1">
    <property type="nucleotide sequence ID" value="NM_152845.2"/>
</dbReference>
<dbReference type="SMR" id="Q8K418"/>
<dbReference type="FunCoup" id="Q8K418">
    <property type="interactions" value="72"/>
</dbReference>
<dbReference type="STRING" id="10116.ENSRNOP00000001164"/>
<dbReference type="BindingDB" id="Q8K418"/>
<dbReference type="ChEMBL" id="CHEMBL1075111"/>
<dbReference type="GuidetoPHARMACOLOGY" id="40"/>
<dbReference type="GlyCosmos" id="Q8K418">
    <property type="glycosylation" value="3 sites, No reported glycans"/>
</dbReference>
<dbReference type="GlyGen" id="Q8K418">
    <property type="glycosylation" value="3 sites"/>
</dbReference>
<dbReference type="iPTMnet" id="Q8K418"/>
<dbReference type="PhosphoSitePlus" id="Q8K418"/>
<dbReference type="PaxDb" id="10116-ENSRNOP00000001164"/>
<dbReference type="GeneID" id="260319"/>
<dbReference type="KEGG" id="rno:260319"/>
<dbReference type="AGR" id="RGD:628645"/>
<dbReference type="CTD" id="680"/>
<dbReference type="RGD" id="628645">
    <property type="gene designation" value="Brs3"/>
</dbReference>
<dbReference type="VEuPathDB" id="HostDB:ENSRNOG00000000873"/>
<dbReference type="eggNOG" id="KOG3656">
    <property type="taxonomic scope" value="Eukaryota"/>
</dbReference>
<dbReference type="HOGENOM" id="CLU_009579_6_2_1"/>
<dbReference type="InParanoid" id="Q8K418"/>
<dbReference type="OrthoDB" id="10049706at2759"/>
<dbReference type="PhylomeDB" id="Q8K418"/>
<dbReference type="TreeFam" id="TF331292"/>
<dbReference type="Reactome" id="R-RNO-375276">
    <property type="pathway name" value="Peptide ligand-binding receptors"/>
</dbReference>
<dbReference type="Reactome" id="R-RNO-416476">
    <property type="pathway name" value="G alpha (q) signalling events"/>
</dbReference>
<dbReference type="PRO" id="PR:Q8K418"/>
<dbReference type="Proteomes" id="UP000002494">
    <property type="component" value="Chromosome X"/>
</dbReference>
<dbReference type="Bgee" id="ENSRNOG00000000873">
    <property type="expression patterns" value="Expressed in testis"/>
</dbReference>
<dbReference type="GO" id="GO:0043025">
    <property type="term" value="C:neuronal cell body"/>
    <property type="evidence" value="ECO:0000314"/>
    <property type="project" value="RGD"/>
</dbReference>
<dbReference type="GO" id="GO:0005886">
    <property type="term" value="C:plasma membrane"/>
    <property type="evidence" value="ECO:0000318"/>
    <property type="project" value="GO_Central"/>
</dbReference>
<dbReference type="GO" id="GO:0004946">
    <property type="term" value="F:bombesin receptor activity"/>
    <property type="evidence" value="ECO:0007669"/>
    <property type="project" value="InterPro"/>
</dbReference>
<dbReference type="GO" id="GO:0008188">
    <property type="term" value="F:neuropeptide receptor activity"/>
    <property type="evidence" value="ECO:0000318"/>
    <property type="project" value="GO_Central"/>
</dbReference>
<dbReference type="GO" id="GO:0007186">
    <property type="term" value="P:G protein-coupled receptor signaling pathway"/>
    <property type="evidence" value="ECO:0000318"/>
    <property type="project" value="GO_Central"/>
</dbReference>
<dbReference type="FunFam" id="1.20.1070.10:FF:000166">
    <property type="entry name" value="Bombesin receptor subtype-3"/>
    <property type="match status" value="1"/>
</dbReference>
<dbReference type="Gene3D" id="1.20.1070.10">
    <property type="entry name" value="Rhodopsin 7-helix transmembrane proteins"/>
    <property type="match status" value="1"/>
</dbReference>
<dbReference type="InterPro" id="IPR001560">
    <property type="entry name" value="Bombesin_rcpt_3"/>
</dbReference>
<dbReference type="InterPro" id="IPR001556">
    <property type="entry name" value="Bombsn_rcpt-like"/>
</dbReference>
<dbReference type="InterPro" id="IPR000276">
    <property type="entry name" value="GPCR_Rhodpsn"/>
</dbReference>
<dbReference type="InterPro" id="IPR017452">
    <property type="entry name" value="GPCR_Rhodpsn_7TM"/>
</dbReference>
<dbReference type="PANTHER" id="PTHR45695:SF6">
    <property type="entry name" value="BOMBESIN RECEPTOR SUBTYPE-3"/>
    <property type="match status" value="1"/>
</dbReference>
<dbReference type="PANTHER" id="PTHR45695">
    <property type="entry name" value="LEUCOKININ RECEPTOR-RELATED"/>
    <property type="match status" value="1"/>
</dbReference>
<dbReference type="Pfam" id="PF00001">
    <property type="entry name" value="7tm_1"/>
    <property type="match status" value="1"/>
</dbReference>
<dbReference type="PRINTS" id="PR00637">
    <property type="entry name" value="BOMBESIN3R"/>
</dbReference>
<dbReference type="PRINTS" id="PR00358">
    <property type="entry name" value="BOMBESINR"/>
</dbReference>
<dbReference type="PRINTS" id="PR00237">
    <property type="entry name" value="GPCRRHODOPSN"/>
</dbReference>
<dbReference type="SMART" id="SM01381">
    <property type="entry name" value="7TM_GPCR_Srsx"/>
    <property type="match status" value="1"/>
</dbReference>
<dbReference type="SUPFAM" id="SSF81321">
    <property type="entry name" value="Family A G protein-coupled receptor-like"/>
    <property type="match status" value="1"/>
</dbReference>
<dbReference type="PROSITE" id="PS00237">
    <property type="entry name" value="G_PROTEIN_RECEP_F1_1"/>
    <property type="match status" value="1"/>
</dbReference>
<dbReference type="PROSITE" id="PS50262">
    <property type="entry name" value="G_PROTEIN_RECEP_F1_2"/>
    <property type="match status" value="1"/>
</dbReference>
<name>BRS3_RAT</name>
<accession>Q8K418</accession>
<keyword id="KW-1003">Cell membrane</keyword>
<keyword id="KW-1015">Disulfide bond</keyword>
<keyword id="KW-0297">G-protein coupled receptor</keyword>
<keyword id="KW-0325">Glycoprotein</keyword>
<keyword id="KW-0449">Lipoprotein</keyword>
<keyword id="KW-0472">Membrane</keyword>
<keyword id="KW-0564">Palmitate</keyword>
<keyword id="KW-0675">Receptor</keyword>
<keyword id="KW-1185">Reference proteome</keyword>
<keyword id="KW-0807">Transducer</keyword>
<keyword id="KW-0812">Transmembrane</keyword>
<keyword id="KW-1133">Transmembrane helix</keyword>
<evidence type="ECO:0000250" key="1"/>
<evidence type="ECO:0000255" key="2"/>
<evidence type="ECO:0000255" key="3">
    <source>
        <dbReference type="PROSITE-ProRule" id="PRU00521"/>
    </source>
</evidence>